<name>SERB_MYCA1</name>
<accession>A0QJI1</accession>
<reference key="1">
    <citation type="submission" date="2006-10" db="EMBL/GenBank/DDBJ databases">
        <authorList>
            <person name="Fleischmann R.D."/>
            <person name="Dodson R.J."/>
            <person name="Haft D.H."/>
            <person name="Merkel J.S."/>
            <person name="Nelson W.C."/>
            <person name="Fraser C.M."/>
        </authorList>
    </citation>
    <scope>NUCLEOTIDE SEQUENCE [LARGE SCALE GENOMIC DNA]</scope>
    <source>
        <strain>104</strain>
    </source>
</reference>
<reference key="2">
    <citation type="journal article" date="2011" name="J. Struct. Funct. Genomics">
        <title>SAD phasing using iodide ions in a high-throughput structural genomics environment.</title>
        <authorList>
            <person name="Abendroth J."/>
            <person name="Gardberg A.S."/>
            <person name="Robinson J.I."/>
            <person name="Christensen J.S."/>
            <person name="Staker B.L."/>
            <person name="Myler P.J."/>
            <person name="Stewart L.J."/>
            <person name="Edwards T.E."/>
        </authorList>
    </citation>
    <scope>X-RAY CRYSTALLOGRAPHY (2.05 ANGSTROMS) IN COMPLEX WITH MAGNESIUM IONS</scope>
    <scope>COFACTOR</scope>
    <scope>SUBUNIT</scope>
</reference>
<sequence>MNSPPKVSVLITVTGVDQPGVTATLFEVLSGHGVELLNVEQVVIRHRLTLGVLVCCPADVADGPALRHDVEAAIRKVGLDVSIERSDDVPIIREPSTHTIFVLGRPITAAAFGAVAREVAALGVNIDLIRGVSDYPVIGLELRVSVPPGADGALRTALNRVSSEEHVDVAVEDYTLERRAKRLIVFDVDSTLVQGEVIEMLAAKAGAEGQVAAITDAAMRGELDFAQSLQQRVATLAGLPATVIDEVAGQLELMPGARTTLRTLRRLGYACGVVSGGFRRIIEPLAEELMLDYVAANELEIVDGTLTGRVVGPIIDRAGKATALREFAQRAGVPMAQTVAVGDGANDIDMLAAAGLGIAFNAKPALREVADASLSHPYLDTVLFLLGVTRGEIEAADAIDGEVRRVEIPPE</sequence>
<protein>
    <recommendedName>
        <fullName>Phosphoserine phosphatase</fullName>
        <shortName>PSP</shortName>
        <shortName>PSPase</shortName>
        <ecNumber>3.1.3.3</ecNumber>
    </recommendedName>
    <alternativeName>
        <fullName>O-phosphoserine phosphohydrolase</fullName>
    </alternativeName>
</protein>
<comment type="function">
    <text evidence="1">Catalyzes the dephosphorylation of phosphoserine (P-Ser).</text>
</comment>
<comment type="catalytic activity">
    <reaction>
        <text>O-phospho-L-serine + H2O = L-serine + phosphate</text>
        <dbReference type="Rhea" id="RHEA:21208"/>
        <dbReference type="ChEBI" id="CHEBI:15377"/>
        <dbReference type="ChEBI" id="CHEBI:33384"/>
        <dbReference type="ChEBI" id="CHEBI:43474"/>
        <dbReference type="ChEBI" id="CHEBI:57524"/>
        <dbReference type="EC" id="3.1.3.3"/>
    </reaction>
</comment>
<comment type="catalytic activity">
    <reaction>
        <text>O-phospho-D-serine + H2O = D-serine + phosphate</text>
        <dbReference type="Rhea" id="RHEA:24873"/>
        <dbReference type="ChEBI" id="CHEBI:15377"/>
        <dbReference type="ChEBI" id="CHEBI:35247"/>
        <dbReference type="ChEBI" id="CHEBI:43474"/>
        <dbReference type="ChEBI" id="CHEBI:58680"/>
        <dbReference type="EC" id="3.1.3.3"/>
    </reaction>
</comment>
<comment type="cofactor">
    <cofactor evidence="3">
        <name>Mg(2+)</name>
        <dbReference type="ChEBI" id="CHEBI:18420"/>
    </cofactor>
    <text evidence="3">Binds 1 Mg(2+) ion per subunit.</text>
</comment>
<comment type="pathway">
    <text>Amino-acid biosynthesis; L-serine biosynthesis; L-serine from 3-phospho-D-glycerate: step 3/3.</text>
</comment>
<comment type="subunit">
    <text evidence="3">Homodimer.</text>
</comment>
<comment type="similarity">
    <text evidence="4">Belongs to the HAD-like hydrolase superfamily. SerB family.</text>
</comment>
<evidence type="ECO:0000250" key="1"/>
<evidence type="ECO:0000255" key="2">
    <source>
        <dbReference type="PROSITE-ProRule" id="PRU01007"/>
    </source>
</evidence>
<evidence type="ECO:0000269" key="3">
    <source>
    </source>
</evidence>
<evidence type="ECO:0000305" key="4"/>
<evidence type="ECO:0007744" key="5">
    <source>
        <dbReference type="PDB" id="3P96"/>
    </source>
</evidence>
<evidence type="ECO:0007829" key="6">
    <source>
        <dbReference type="PDB" id="5IS2"/>
    </source>
</evidence>
<evidence type="ECO:0007829" key="7">
    <source>
        <dbReference type="PDB" id="8A1Z"/>
    </source>
</evidence>
<feature type="chain" id="PRO_0000401184" description="Phosphoserine phosphatase">
    <location>
        <begin position="1"/>
        <end position="411"/>
    </location>
</feature>
<feature type="domain" description="ACT" evidence="2">
    <location>
        <begin position="10"/>
        <end position="88"/>
    </location>
</feature>
<feature type="active site" description="Nucleophile" evidence="1">
    <location>
        <position position="187"/>
    </location>
</feature>
<feature type="active site" description="Proton donor" evidence="1">
    <location>
        <position position="189"/>
    </location>
</feature>
<feature type="binding site" evidence="3 5">
    <location>
        <position position="187"/>
    </location>
    <ligand>
        <name>Mg(2+)</name>
        <dbReference type="ChEBI" id="CHEBI:18420"/>
    </ligand>
</feature>
<feature type="binding site" evidence="3 5">
    <location>
        <position position="189"/>
    </location>
    <ligand>
        <name>Mg(2+)</name>
        <dbReference type="ChEBI" id="CHEBI:18420"/>
    </ligand>
</feature>
<feature type="binding site" evidence="1">
    <location>
        <position position="196"/>
    </location>
    <ligand>
        <name>substrate</name>
    </ligand>
</feature>
<feature type="binding site" evidence="1">
    <location>
        <position position="232"/>
    </location>
    <ligand>
        <name>substrate</name>
    </ligand>
</feature>
<feature type="binding site" evidence="1">
    <location>
        <begin position="275"/>
        <end position="276"/>
    </location>
    <ligand>
        <name>substrate</name>
    </ligand>
</feature>
<feature type="binding site" evidence="1">
    <location>
        <position position="320"/>
    </location>
    <ligand>
        <name>substrate</name>
    </ligand>
</feature>
<feature type="binding site" evidence="3 5">
    <location>
        <position position="343"/>
    </location>
    <ligand>
        <name>Mg(2+)</name>
        <dbReference type="ChEBI" id="CHEBI:18420"/>
    </ligand>
</feature>
<feature type="binding site" evidence="1">
    <location>
        <position position="346"/>
    </location>
    <ligand>
        <name>substrate</name>
    </ligand>
</feature>
<feature type="strand" evidence="6">
    <location>
        <begin position="7"/>
        <end position="16"/>
    </location>
</feature>
<feature type="helix" evidence="6">
    <location>
        <begin position="21"/>
        <end position="30"/>
    </location>
</feature>
<feature type="turn" evidence="6">
    <location>
        <begin position="31"/>
        <end position="33"/>
    </location>
</feature>
<feature type="strand" evidence="6">
    <location>
        <begin position="35"/>
        <end position="44"/>
    </location>
</feature>
<feature type="strand" evidence="6">
    <location>
        <begin position="47"/>
        <end position="56"/>
    </location>
</feature>
<feature type="helix" evidence="6">
    <location>
        <begin position="58"/>
        <end position="61"/>
    </location>
</feature>
<feature type="helix" evidence="6">
    <location>
        <begin position="64"/>
        <end position="76"/>
    </location>
</feature>
<feature type="strand" evidence="6">
    <location>
        <begin position="80"/>
        <end position="85"/>
    </location>
</feature>
<feature type="strand" evidence="6">
    <location>
        <begin position="87"/>
        <end position="89"/>
    </location>
</feature>
<feature type="strand" evidence="6">
    <location>
        <begin position="97"/>
        <end position="106"/>
    </location>
</feature>
<feature type="helix" evidence="6">
    <location>
        <begin position="109"/>
        <end position="121"/>
    </location>
</feature>
<feature type="strand" evidence="6">
    <location>
        <begin position="125"/>
        <end position="145"/>
    </location>
</feature>
<feature type="turn" evidence="7">
    <location>
        <begin position="148"/>
        <end position="150"/>
    </location>
</feature>
<feature type="helix" evidence="6">
    <location>
        <begin position="151"/>
        <end position="165"/>
    </location>
</feature>
<feature type="strand" evidence="6">
    <location>
        <begin position="168"/>
        <end position="173"/>
    </location>
</feature>
<feature type="turn" evidence="6">
    <location>
        <begin position="176"/>
        <end position="179"/>
    </location>
</feature>
<feature type="strand" evidence="6">
    <location>
        <begin position="183"/>
        <end position="186"/>
    </location>
</feature>
<feature type="turn" evidence="6">
    <location>
        <begin position="190"/>
        <end position="192"/>
    </location>
</feature>
<feature type="strand" evidence="6">
    <location>
        <begin position="193"/>
        <end position="195"/>
    </location>
</feature>
<feature type="helix" evidence="6">
    <location>
        <begin position="197"/>
        <end position="204"/>
    </location>
</feature>
<feature type="turn" evidence="6">
    <location>
        <begin position="208"/>
        <end position="210"/>
    </location>
</feature>
<feature type="helix" evidence="6">
    <location>
        <begin position="214"/>
        <end position="219"/>
    </location>
</feature>
<feature type="helix" evidence="6">
    <location>
        <begin position="225"/>
        <end position="234"/>
    </location>
</feature>
<feature type="turn" evidence="6">
    <location>
        <begin position="235"/>
        <end position="238"/>
    </location>
</feature>
<feature type="helix" evidence="6">
    <location>
        <begin position="242"/>
        <end position="248"/>
    </location>
</feature>
<feature type="helix" evidence="6">
    <location>
        <begin position="257"/>
        <end position="266"/>
    </location>
</feature>
<feature type="strand" evidence="6">
    <location>
        <begin position="270"/>
        <end position="278"/>
    </location>
</feature>
<feature type="helix" evidence="6">
    <location>
        <begin position="279"/>
        <end position="288"/>
    </location>
</feature>
<feature type="strand" evidence="6">
    <location>
        <begin position="292"/>
        <end position="297"/>
    </location>
</feature>
<feature type="strand" evidence="6">
    <location>
        <begin position="299"/>
        <end position="302"/>
    </location>
</feature>
<feature type="strand" evidence="6">
    <location>
        <begin position="305"/>
        <end position="310"/>
    </location>
</feature>
<feature type="helix" evidence="6">
    <location>
        <begin position="317"/>
        <end position="331"/>
    </location>
</feature>
<feature type="helix" evidence="6">
    <location>
        <begin position="335"/>
        <end position="337"/>
    </location>
</feature>
<feature type="strand" evidence="6">
    <location>
        <begin position="338"/>
        <end position="342"/>
    </location>
</feature>
<feature type="helix" evidence="6">
    <location>
        <begin position="345"/>
        <end position="347"/>
    </location>
</feature>
<feature type="helix" evidence="6">
    <location>
        <begin position="348"/>
        <end position="353"/>
    </location>
</feature>
<feature type="strand" evidence="6">
    <location>
        <begin position="354"/>
        <end position="361"/>
    </location>
</feature>
<feature type="helix" evidence="6">
    <location>
        <begin position="364"/>
        <end position="367"/>
    </location>
</feature>
<feature type="strand" evidence="6">
    <location>
        <begin position="370"/>
        <end position="374"/>
    </location>
</feature>
<feature type="helix" evidence="6">
    <location>
        <begin position="381"/>
        <end position="385"/>
    </location>
</feature>
<feature type="helix" evidence="6">
    <location>
        <begin position="390"/>
        <end position="399"/>
    </location>
</feature>
<dbReference type="EC" id="3.1.3.3"/>
<dbReference type="EMBL" id="CP000479">
    <property type="protein sequence ID" value="ABK66444.1"/>
    <property type="molecule type" value="Genomic_DNA"/>
</dbReference>
<dbReference type="RefSeq" id="WP_011725747.1">
    <property type="nucleotide sequence ID" value="NC_008595.1"/>
</dbReference>
<dbReference type="PDB" id="3P96">
    <property type="method" value="X-ray"/>
    <property type="resolution" value="2.05 A"/>
    <property type="chains" value="A=1-411"/>
</dbReference>
<dbReference type="PDB" id="5IS2">
    <property type="method" value="X-ray"/>
    <property type="resolution" value="1.88 A"/>
    <property type="chains" value="A=5-400"/>
</dbReference>
<dbReference type="PDB" id="5IT0">
    <property type="method" value="X-ray"/>
    <property type="resolution" value="1.97 A"/>
    <property type="chains" value="A=5-400"/>
</dbReference>
<dbReference type="PDB" id="5IT4">
    <property type="method" value="X-ray"/>
    <property type="resolution" value="2.10 A"/>
    <property type="chains" value="A=5-400"/>
</dbReference>
<dbReference type="PDB" id="5JJB">
    <property type="method" value="X-ray"/>
    <property type="resolution" value="2.31 A"/>
    <property type="chains" value="A=5-400"/>
</dbReference>
<dbReference type="PDB" id="5JLP">
    <property type="method" value="X-ray"/>
    <property type="resolution" value="2.50 A"/>
    <property type="chains" value="A=5-400"/>
</dbReference>
<dbReference type="PDB" id="5JLR">
    <property type="method" value="X-ray"/>
    <property type="resolution" value="2.26 A"/>
    <property type="chains" value="A=5-400"/>
</dbReference>
<dbReference type="PDB" id="5JMA">
    <property type="method" value="X-ray"/>
    <property type="resolution" value="2.03 A"/>
    <property type="chains" value="A=5-400"/>
</dbReference>
<dbReference type="PDB" id="5T41">
    <property type="method" value="X-ray"/>
    <property type="resolution" value="3.15 A"/>
    <property type="chains" value="A=5-400"/>
</dbReference>
<dbReference type="PDB" id="8A1Z">
    <property type="method" value="X-ray"/>
    <property type="resolution" value="2.28 A"/>
    <property type="chains" value="A=1-411"/>
</dbReference>
<dbReference type="PDB" id="8A21">
    <property type="method" value="X-ray"/>
    <property type="resolution" value="2.18 A"/>
    <property type="chains" value="A=1-411"/>
</dbReference>
<dbReference type="PDBsum" id="3P96"/>
<dbReference type="PDBsum" id="5IS2"/>
<dbReference type="PDBsum" id="5IT0"/>
<dbReference type="PDBsum" id="5IT4"/>
<dbReference type="PDBsum" id="5JJB"/>
<dbReference type="PDBsum" id="5JLP"/>
<dbReference type="PDBsum" id="5JLR"/>
<dbReference type="PDBsum" id="5JMA"/>
<dbReference type="PDBsum" id="5T41"/>
<dbReference type="PDBsum" id="8A1Z"/>
<dbReference type="PDBsum" id="8A21"/>
<dbReference type="SASBDB" id="A0QJI1"/>
<dbReference type="SMR" id="A0QJI1"/>
<dbReference type="KEGG" id="mav:MAV_3907"/>
<dbReference type="HOGENOM" id="CLU_036368_1_1_11"/>
<dbReference type="UniPathway" id="UPA00135">
    <property type="reaction ID" value="UER00198"/>
</dbReference>
<dbReference type="EvolutionaryTrace" id="A0QJI1"/>
<dbReference type="Proteomes" id="UP000001574">
    <property type="component" value="Chromosome"/>
</dbReference>
<dbReference type="GO" id="GO:0005737">
    <property type="term" value="C:cytoplasm"/>
    <property type="evidence" value="ECO:0007669"/>
    <property type="project" value="TreeGrafter"/>
</dbReference>
<dbReference type="GO" id="GO:0036424">
    <property type="term" value="F:L-phosphoserine phosphatase activity"/>
    <property type="evidence" value="ECO:0007669"/>
    <property type="project" value="InterPro"/>
</dbReference>
<dbReference type="GO" id="GO:0000287">
    <property type="term" value="F:magnesium ion binding"/>
    <property type="evidence" value="ECO:0000314"/>
    <property type="project" value="UniProtKB"/>
</dbReference>
<dbReference type="GO" id="GO:0006564">
    <property type="term" value="P:L-serine biosynthetic process"/>
    <property type="evidence" value="ECO:0007669"/>
    <property type="project" value="UniProtKB-KW"/>
</dbReference>
<dbReference type="CDD" id="cd04870">
    <property type="entry name" value="ACT_PSP_1"/>
    <property type="match status" value="1"/>
</dbReference>
<dbReference type="CDD" id="cd04871">
    <property type="entry name" value="ACT_PSP_2"/>
    <property type="match status" value="1"/>
</dbReference>
<dbReference type="CDD" id="cd07500">
    <property type="entry name" value="HAD_PSP"/>
    <property type="match status" value="1"/>
</dbReference>
<dbReference type="FunFam" id="3.30.70.260:FF:000041">
    <property type="entry name" value="Phosphoserine phosphatase SerB"/>
    <property type="match status" value="1"/>
</dbReference>
<dbReference type="FunFam" id="3.30.70.260:FF:000043">
    <property type="entry name" value="Phosphoserine phosphatase SerB"/>
    <property type="match status" value="1"/>
</dbReference>
<dbReference type="FunFam" id="3.40.50.1000:FF:000041">
    <property type="entry name" value="Phosphoserine phosphatase SerB"/>
    <property type="match status" value="1"/>
</dbReference>
<dbReference type="Gene3D" id="3.30.70.260">
    <property type="match status" value="2"/>
</dbReference>
<dbReference type="Gene3D" id="3.40.50.1000">
    <property type="entry name" value="HAD superfamily/HAD-like"/>
    <property type="match status" value="1"/>
</dbReference>
<dbReference type="InterPro" id="IPR045865">
    <property type="entry name" value="ACT-like_dom_sf"/>
</dbReference>
<dbReference type="InterPro" id="IPR002912">
    <property type="entry name" value="ACT_dom"/>
</dbReference>
<dbReference type="InterPro" id="IPR050582">
    <property type="entry name" value="HAD-like_SerB"/>
</dbReference>
<dbReference type="InterPro" id="IPR036412">
    <property type="entry name" value="HAD-like_sf"/>
</dbReference>
<dbReference type="InterPro" id="IPR023214">
    <property type="entry name" value="HAD_sf"/>
</dbReference>
<dbReference type="InterPro" id="IPR004469">
    <property type="entry name" value="PSP"/>
</dbReference>
<dbReference type="InterPro" id="IPR049148">
    <property type="entry name" value="PSP_ACT"/>
</dbReference>
<dbReference type="NCBIfam" id="TIGR01488">
    <property type="entry name" value="HAD-SF-IB"/>
    <property type="match status" value="1"/>
</dbReference>
<dbReference type="NCBIfam" id="TIGR00338">
    <property type="entry name" value="serB"/>
    <property type="match status" value="1"/>
</dbReference>
<dbReference type="PANTHER" id="PTHR43344">
    <property type="entry name" value="PHOSPHOSERINE PHOSPHATASE"/>
    <property type="match status" value="1"/>
</dbReference>
<dbReference type="PANTHER" id="PTHR43344:SF2">
    <property type="entry name" value="PHOSPHOSERINE PHOSPHATASE"/>
    <property type="match status" value="1"/>
</dbReference>
<dbReference type="Pfam" id="PF13740">
    <property type="entry name" value="ACT_6"/>
    <property type="match status" value="1"/>
</dbReference>
<dbReference type="Pfam" id="PF21086">
    <property type="entry name" value="ACT_PSP_2"/>
    <property type="match status" value="1"/>
</dbReference>
<dbReference type="Pfam" id="PF12710">
    <property type="entry name" value="HAD"/>
    <property type="match status" value="1"/>
</dbReference>
<dbReference type="SFLD" id="SFLDG01137">
    <property type="entry name" value="C1.6.1:_Phosphoserine_Phosphat"/>
    <property type="match status" value="1"/>
</dbReference>
<dbReference type="SFLD" id="SFLDF00029">
    <property type="entry name" value="phosphoserine_phosphatase"/>
    <property type="match status" value="1"/>
</dbReference>
<dbReference type="SUPFAM" id="SSF55021">
    <property type="entry name" value="ACT-like"/>
    <property type="match status" value="1"/>
</dbReference>
<dbReference type="SUPFAM" id="SSF56784">
    <property type="entry name" value="HAD-like"/>
    <property type="match status" value="1"/>
</dbReference>
<dbReference type="PROSITE" id="PS51671">
    <property type="entry name" value="ACT"/>
    <property type="match status" value="1"/>
</dbReference>
<proteinExistence type="evidence at protein level"/>
<keyword id="KW-0002">3D-structure</keyword>
<keyword id="KW-0028">Amino-acid biosynthesis</keyword>
<keyword id="KW-0378">Hydrolase</keyword>
<keyword id="KW-0460">Magnesium</keyword>
<keyword id="KW-0479">Metal-binding</keyword>
<keyword id="KW-0718">Serine biosynthesis</keyword>
<gene>
    <name type="primary">serB</name>
    <name type="ordered locus">MAV_3907</name>
</gene>
<organism>
    <name type="scientific">Mycobacterium avium (strain 104)</name>
    <dbReference type="NCBI Taxonomy" id="243243"/>
    <lineage>
        <taxon>Bacteria</taxon>
        <taxon>Bacillati</taxon>
        <taxon>Actinomycetota</taxon>
        <taxon>Actinomycetes</taxon>
        <taxon>Mycobacteriales</taxon>
        <taxon>Mycobacteriaceae</taxon>
        <taxon>Mycobacterium</taxon>
        <taxon>Mycobacterium avium complex (MAC)</taxon>
    </lineage>
</organism>